<evidence type="ECO:0000256" key="1">
    <source>
        <dbReference type="SAM" id="MobiDB-lite"/>
    </source>
</evidence>
<evidence type="ECO:0000269" key="2">
    <source>
    </source>
</evidence>
<evidence type="ECO:0000269" key="3">
    <source>
    </source>
</evidence>
<evidence type="ECO:0000305" key="4"/>
<evidence type="ECO:0000305" key="5">
    <source>
    </source>
</evidence>
<evidence type="ECO:0000312" key="6">
    <source>
        <dbReference type="EMBL" id="AAC96710.1"/>
    </source>
</evidence>
<evidence type="ECO:0000312" key="7">
    <source>
        <dbReference type="Proteomes" id="UP000000862"/>
    </source>
</evidence>
<evidence type="ECO:0007744" key="8">
    <source>
        <dbReference type="PDB" id="6NCL"/>
    </source>
</evidence>
<evidence type="ECO:0007744" key="9">
    <source>
        <dbReference type="PDB" id="8H2I"/>
    </source>
</evidence>
<proteinExistence type="evidence at protein level"/>
<name>P2_PBCV1</name>
<reference key="1">
    <citation type="journal article" date="1996" name="Virology">
        <title>Analysis of 76 kb of the chlorella virus PBCV-1 330-kb genome: map positions 182 to 258.</title>
        <authorList>
            <person name="Kutish G.F."/>
            <person name="Li Y."/>
            <person name="Lu Z."/>
            <person name="Furuta M."/>
            <person name="Rock D.L."/>
            <person name="van Etten J.L."/>
        </authorList>
    </citation>
    <scope>NUCLEOTIDE SEQUENCE [LARGE SCALE GENOMIC DNA]</scope>
</reference>
<reference key="2">
    <citation type="journal article" date="2010" name="J. Virol.">
        <title>Microarray analysis of Paramecium bursaria chlorella virus 1 transcription.</title>
        <authorList>
            <person name="Yanai-Balser G.M."/>
            <person name="Duncan G.A."/>
            <person name="Eudy J.D."/>
            <person name="Wang D."/>
            <person name="Li X."/>
            <person name="Agarkova I.V."/>
            <person name="Dunigan D.D."/>
            <person name="Van Etten J.L."/>
        </authorList>
    </citation>
    <scope>INDUCTION</scope>
</reference>
<reference evidence="8" key="3">
    <citation type="journal article" date="2019" name="Nat. Commun.">
        <title>Near-atomic structure of a giant virus.</title>
        <authorList>
            <person name="Fang Q."/>
            <person name="Zhu D."/>
            <person name="Agarkova I."/>
            <person name="Adhikari J."/>
            <person name="Klose T."/>
            <person name="Liu Y."/>
            <person name="Chen Z."/>
            <person name="Sun Y."/>
            <person name="Gross M.L."/>
            <person name="Van Etten J.L."/>
            <person name="Zhang X."/>
            <person name="Rossmann M.G."/>
        </authorList>
    </citation>
    <scope>STRUCTURE BY ELECTRON MICROSCOPY (3.50 ANGSTROMS)</scope>
    <scope>FUNCTION</scope>
    <scope>SUBCELLULAR LOCATION</scope>
    <scope>INTERACTION WITH THE MAJOR CAPSID PROTEIN</scope>
</reference>
<reference evidence="9" key="4">
    <citation type="journal article" date="2022" name="Nat. Commun.">
        <title>Near-atomic, non-icosahedrally averaged structure of giant virus Paramecium bursaria chlorella virus 1.</title>
        <authorList>
            <person name="Shao Q."/>
            <person name="Agarkova I.V."/>
            <person name="Noel E.A."/>
            <person name="Dunigan D.D."/>
            <person name="Liu Y."/>
            <person name="Wang A."/>
            <person name="Guo M."/>
            <person name="Xie L."/>
            <person name="Zhao X."/>
            <person name="Rossmann M.G."/>
            <person name="Van Etten J.L."/>
            <person name="Klose T."/>
            <person name="Fang Q."/>
        </authorList>
    </citation>
    <scope>STRUCTURE BY ELECTRON MICROSCOPY (3.80 ANGSTROMS)</scope>
</reference>
<feature type="chain" id="PRO_0000460568" description="Minor capsid protein P2">
    <location>
        <begin position="1"/>
        <end position="576"/>
    </location>
</feature>
<feature type="region of interest" description="Hydrophobic" evidence="4">
    <location>
        <begin position="13"/>
        <end position="35"/>
    </location>
</feature>
<feature type="region of interest" description="Disordered" evidence="1">
    <location>
        <begin position="322"/>
        <end position="348"/>
    </location>
</feature>
<organismHost>
    <name type="scientific">Chlorella</name>
    <dbReference type="NCBI Taxonomy" id="3071"/>
</organismHost>
<gene>
    <name evidence="6" type="primary">A342L</name>
</gene>
<dbReference type="EMBL" id="JF411744">
    <property type="protein sequence ID" value="AAC96710.1"/>
    <property type="molecule type" value="Genomic_DNA"/>
</dbReference>
<dbReference type="PIR" id="T17842">
    <property type="entry name" value="T17842"/>
</dbReference>
<dbReference type="RefSeq" id="NP_048699.1">
    <property type="nucleotide sequence ID" value="NC_000852.5"/>
</dbReference>
<dbReference type="PDB" id="6NCL">
    <property type="method" value="EM"/>
    <property type="resolution" value="3.50 A"/>
    <property type="chains" value="b6=1-576"/>
</dbReference>
<dbReference type="PDB" id="8H2I">
    <property type="method" value="EM"/>
    <property type="resolution" value="3.80 A"/>
    <property type="chains" value="bH=1-576"/>
</dbReference>
<dbReference type="PDBsum" id="6NCL"/>
<dbReference type="PDBsum" id="8H2I"/>
<dbReference type="EMDB" id="EMD-0436"/>
<dbReference type="EMDB" id="EMD-34438"/>
<dbReference type="SMR" id="Q84656"/>
<dbReference type="GeneID" id="918363"/>
<dbReference type="KEGG" id="vg:918363"/>
<dbReference type="OrthoDB" id="1877at10239"/>
<dbReference type="Proteomes" id="UP000000862">
    <property type="component" value="Genome"/>
</dbReference>
<dbReference type="GO" id="GO:0019028">
    <property type="term" value="C:viral capsid"/>
    <property type="evidence" value="ECO:0007669"/>
    <property type="project" value="UniProtKB-KW"/>
</dbReference>
<dbReference type="InterPro" id="IPR045418">
    <property type="entry name" value="P2_DUF5899"/>
</dbReference>
<dbReference type="Pfam" id="PF19251">
    <property type="entry name" value="DUF5899"/>
    <property type="match status" value="1"/>
</dbReference>
<sequence length="576" mass="63813">MCNTYYKRVKFNLFLYTNSIEMELLAVASIIGYGLFSSQQGRETRPDRNRYAEALGSGQGLDEDYDVKPTDMVRKYRKKAEKRWKKAQVPKESGIITPNMRPSEVMPYFTSGKSMNTNTDYKQRKMELFTGGVLDGHSVSGTYKHKVEAANMFGMTPQGRVTSDGTVGNAPGDTELLKARSVNSHQYNNVLPTEQLRVGPGLGVGPEVAATGGFHQFYRQLPLNINEYKLTQLPGRLVPGGTTTGGKGEIQQIASVNHNPDALVLNYDDRPPEATPNGAILASTQYGKQPRGYAGLRPYEKNYEGIAEADVSALQARYLDQTRGRPRTGDGDTEPIINPNGERDGTGSYVTENMCSMTLESQRGLVNRYITPPGVTGVVQQGGEMRPEFVPETTIREQYEDIYYTGPAGTTVTPTEPMNVVELQPESRHAKRAGQDRAYTPGAGRVNNFAPAAQGAYGLKDHPTYNALQHVVSEPIEQTFLPAAQGDDDRFGTKSNVNNPWGNPASLQIANNQLAANKFNRDVTNTVNLDYDAGQPMKQQNFQPKAWIPNNTDDMKMLPLWKRKQLQAQKNKQQRK</sequence>
<accession>Q84656</accession>
<organism evidence="6 7">
    <name type="scientific">Paramecium bursaria Chlorella virus 1</name>
    <name type="common">PBCV-1</name>
    <dbReference type="NCBI Taxonomy" id="10506"/>
    <lineage>
        <taxon>Viruses</taxon>
        <taxon>Varidnaviria</taxon>
        <taxon>Bamfordvirae</taxon>
        <taxon>Nucleocytoviricota</taxon>
        <taxon>Megaviricetes</taxon>
        <taxon>Algavirales</taxon>
        <taxon>Phycodnaviridae</taxon>
        <taxon>Chlorovirus</taxon>
    </lineage>
</organism>
<comment type="function">
    <text evidence="3">One of the minor capsid proteins that constitute a network internal to the major capsid proteins and outside the lipid membrane (PubMed:30674888). The minor capsid proteins glue and stabilize the capsomers (PubMed:30674888). Also acts as a molecular tape measure protein that determines the size of the viral capsid (PubMed:30674888).</text>
</comment>
<comment type="subunit">
    <text evidence="3">Interacts with the major capsid protein.</text>
</comment>
<comment type="subcellular location">
    <subcellularLocation>
        <location evidence="3">Virion</location>
    </subcellularLocation>
</comment>
<comment type="induction">
    <text evidence="2">Expressed in the early-late phase of the viral replicative cycle.</text>
</comment>
<comment type="domain">
    <text evidence="5">The hydrophobic region might anchor the protein in the underlying inner membrane.</text>
</comment>
<protein>
    <recommendedName>
        <fullName>Minor capsid protein P2</fullName>
    </recommendedName>
</protein>
<keyword id="KW-0002">3D-structure</keyword>
<keyword id="KW-0167">Capsid protein</keyword>
<keyword id="KW-0426">Late protein</keyword>
<keyword id="KW-1185">Reference proteome</keyword>
<keyword id="KW-0946">Virion</keyword>